<comment type="function">
    <text evidence="2 7">ADP:ATP antiporter that mediates import of ADP into the mitochondrial matrix for ATP synthesis, and export of ATP out to fuel the cell (By similarity). Cycles between the cytoplasmic-open state (c-state) and the matrix-open state (m-state): operates by the alternating access mechanism with a single substrate-binding site intermittently exposed to either the cytosolic (c-state) or matrix (m-state) side of the inner mitochondrial membrane (By similarity).</text>
</comment>
<comment type="catalytic activity">
    <reaction evidence="7">
        <text>ADP(in) + ATP(out) = ADP(out) + ATP(in)</text>
        <dbReference type="Rhea" id="RHEA:34999"/>
        <dbReference type="ChEBI" id="CHEBI:30616"/>
        <dbReference type="ChEBI" id="CHEBI:456216"/>
    </reaction>
    <physiologicalReaction direction="left-to-right" evidence="7">
        <dbReference type="Rhea" id="RHEA:35000"/>
    </physiologicalReaction>
</comment>
<comment type="activity regulation">
    <text evidence="2">The matrix-open state (m-state) is inhibited by the membrane-permeable bongkrekic acid (BKA). The cytoplasmic-open state (c-state) is inhibited by the membrane-impermeable toxic inhibitor carboxyatractyloside (CATR).</text>
</comment>
<comment type="subunit">
    <text evidence="2 3">Monomer.</text>
</comment>
<comment type="subcellular location">
    <subcellularLocation>
        <location evidence="6">Mitochondrion inner membrane</location>
        <topology evidence="8">Multi-pass membrane protein</topology>
    </subcellularLocation>
</comment>
<comment type="domain">
    <text evidence="5">The transmembrane helices are not perpendicular to the plane of the membrane, but cross the membrane at an angle. At least 2 of the odd-numbered transmembrane helices exhibit a sharp kink, due to the presence of a conserved proline residue.</text>
</comment>
<comment type="similarity">
    <text evidence="9">Belongs to the mitochondrial carrier (TC 2.A.29) family.</text>
</comment>
<accession>O22342</accession>
<protein>
    <recommendedName>
        <fullName>ADP,ATP carrier protein 1, mitochondrial</fullName>
    </recommendedName>
    <alternativeName>
        <fullName>ADP/ATP translocase 1</fullName>
    </alternativeName>
    <alternativeName>
        <fullName>Adenine nucleotide translocator 1</fullName>
        <shortName>ANT 1</shortName>
    </alternativeName>
</protein>
<feature type="transit peptide" description="Mitochondrion" evidence="1">
    <location>
        <begin position="1"/>
        <end position="76"/>
    </location>
</feature>
<feature type="chain" id="PRO_0000019247" description="ADP,ATP carrier protein 1, mitochondrial">
    <location>
        <begin position="77"/>
        <end position="386"/>
    </location>
</feature>
<feature type="transmembrane region" description="Helical; Name=1" evidence="5">
    <location>
        <begin position="86"/>
        <end position="113"/>
    </location>
</feature>
<feature type="transmembrane region" description="Helical; Name=2" evidence="5">
    <location>
        <begin position="154"/>
        <end position="178"/>
    </location>
</feature>
<feature type="transmembrane region" description="Helical; Name=3" evidence="5">
    <location>
        <begin position="187"/>
        <end position="207"/>
    </location>
</feature>
<feature type="transmembrane region" description="Helical; Name=4" evidence="5">
    <location>
        <begin position="257"/>
        <end position="278"/>
    </location>
</feature>
<feature type="transmembrane region" description="Helical; Name=5" evidence="5">
    <location>
        <begin position="292"/>
        <end position="312"/>
    </location>
</feature>
<feature type="transmembrane region" description="Helical; Name=6" evidence="5">
    <location>
        <begin position="352"/>
        <end position="372"/>
    </location>
</feature>
<feature type="repeat" description="Solcar 1">
    <location>
        <begin position="84"/>
        <end position="177"/>
    </location>
</feature>
<feature type="repeat" description="Solcar 2">
    <location>
        <begin position="189"/>
        <end position="281"/>
    </location>
</feature>
<feature type="repeat" description="Solcar 3">
    <location>
        <begin position="289"/>
        <end position="375"/>
    </location>
</feature>
<feature type="region of interest" description="Important for transport activity" evidence="4">
    <location>
        <begin position="316"/>
        <end position="321"/>
    </location>
</feature>
<feature type="short sequence motif" description="Nucleotide carrier signature motif" evidence="3">
    <location>
        <begin position="316"/>
        <end position="321"/>
    </location>
</feature>
<feature type="binding site" evidence="3">
    <location>
        <position position="159"/>
    </location>
    <ligand>
        <name>ADP</name>
        <dbReference type="ChEBI" id="CHEBI:456216"/>
    </ligand>
</feature>
<feature type="binding site" evidence="3">
    <location>
        <position position="171"/>
    </location>
    <ligand>
        <name>ADP</name>
        <dbReference type="ChEBI" id="CHEBI:456216"/>
    </ligand>
</feature>
<feature type="binding site" evidence="3">
    <location>
        <position position="316"/>
    </location>
    <ligand>
        <name>ADP</name>
        <dbReference type="ChEBI" id="CHEBI:456216"/>
    </ligand>
</feature>
<name>ADT1_GOSHI</name>
<reference key="1">
    <citation type="online journal article" date="1997" name="Plant Gene Register">
        <title>Two cDNA sequences for the adenine nucleotide translocator, CANT1 and CANT2, from cotton fibers (Gossypium hirsutum).</title>
        <authorList>
            <person name="Shin H."/>
            <person name="Brown R.M. Jr."/>
        </authorList>
        <locator>PGR97-130</locator>
    </citation>
    <scope>NUCLEOTIDE SEQUENCE [MRNA]</scope>
    <source>
        <strain>cv. Texas Marker 1</strain>
        <tissue>Fiber</tissue>
    </source>
</reference>
<keyword id="KW-0050">Antiport</keyword>
<keyword id="KW-0472">Membrane</keyword>
<keyword id="KW-0496">Mitochondrion</keyword>
<keyword id="KW-0999">Mitochondrion inner membrane</keyword>
<keyword id="KW-1185">Reference proteome</keyword>
<keyword id="KW-0677">Repeat</keyword>
<keyword id="KW-0809">Transit peptide</keyword>
<keyword id="KW-0812">Transmembrane</keyword>
<keyword id="KW-1133">Transmembrane helix</keyword>
<keyword id="KW-0813">Transport</keyword>
<evidence type="ECO:0000250" key="1"/>
<evidence type="ECO:0000250" key="2">
    <source>
        <dbReference type="UniProtKB" id="G2QNH0"/>
    </source>
</evidence>
<evidence type="ECO:0000250" key="3">
    <source>
        <dbReference type="UniProtKB" id="P02722"/>
    </source>
</evidence>
<evidence type="ECO:0000250" key="4">
    <source>
        <dbReference type="UniProtKB" id="P12235"/>
    </source>
</evidence>
<evidence type="ECO:0000250" key="5">
    <source>
        <dbReference type="UniProtKB" id="P18239"/>
    </source>
</evidence>
<evidence type="ECO:0000250" key="6">
    <source>
        <dbReference type="UniProtKB" id="P31167"/>
    </source>
</evidence>
<evidence type="ECO:0000250" key="7">
    <source>
        <dbReference type="UniProtKB" id="P48962"/>
    </source>
</evidence>
<evidence type="ECO:0000255" key="8"/>
<evidence type="ECO:0000305" key="9"/>
<proteinExistence type="evidence at transcript level"/>
<dbReference type="EMBL" id="AF006489">
    <property type="protein sequence ID" value="AAB72047.1"/>
    <property type="molecule type" value="mRNA"/>
</dbReference>
<dbReference type="PIR" id="T09709">
    <property type="entry name" value="T09709"/>
</dbReference>
<dbReference type="RefSeq" id="NP_001314189.1">
    <property type="nucleotide sequence ID" value="NM_001327260.1"/>
</dbReference>
<dbReference type="SMR" id="O22342"/>
<dbReference type="STRING" id="3635.O22342"/>
<dbReference type="PaxDb" id="3635-O22342"/>
<dbReference type="GeneID" id="107926278"/>
<dbReference type="KEGG" id="ghi:107926278"/>
<dbReference type="Proteomes" id="UP000189702">
    <property type="component" value="Unplaced"/>
</dbReference>
<dbReference type="GO" id="GO:0005743">
    <property type="term" value="C:mitochondrial inner membrane"/>
    <property type="evidence" value="ECO:0007669"/>
    <property type="project" value="UniProtKB-SubCell"/>
</dbReference>
<dbReference type="GO" id="GO:0005471">
    <property type="term" value="F:ATP:ADP antiporter activity"/>
    <property type="evidence" value="ECO:0000318"/>
    <property type="project" value="GO_Central"/>
</dbReference>
<dbReference type="GO" id="GO:0140021">
    <property type="term" value="P:mitochondrial ADP transmembrane transport"/>
    <property type="evidence" value="ECO:0007669"/>
    <property type="project" value="InterPro"/>
</dbReference>
<dbReference type="GO" id="GO:1990544">
    <property type="term" value="P:mitochondrial ATP transmembrane transport"/>
    <property type="evidence" value="ECO:0007669"/>
    <property type="project" value="InterPro"/>
</dbReference>
<dbReference type="FunFam" id="1.50.40.10:FF:000001">
    <property type="entry name" value="ADP,ATP carrier protein, mitochondrial"/>
    <property type="match status" value="1"/>
</dbReference>
<dbReference type="Gene3D" id="1.50.40.10">
    <property type="entry name" value="Mitochondrial carrier domain"/>
    <property type="match status" value="1"/>
</dbReference>
<dbReference type="InterPro" id="IPR002113">
    <property type="entry name" value="ADT_euk_type"/>
</dbReference>
<dbReference type="InterPro" id="IPR002067">
    <property type="entry name" value="Mit_carrier"/>
</dbReference>
<dbReference type="InterPro" id="IPR018108">
    <property type="entry name" value="Mitochondrial_sb/sol_carrier"/>
</dbReference>
<dbReference type="InterPro" id="IPR023395">
    <property type="entry name" value="Mt_carrier_dom_sf"/>
</dbReference>
<dbReference type="PANTHER" id="PTHR45635:SF41">
    <property type="entry name" value="ADP,ATP CARRIER PROTEIN 1, MITOCHONDRIAL"/>
    <property type="match status" value="1"/>
</dbReference>
<dbReference type="PANTHER" id="PTHR45635">
    <property type="entry name" value="ADP,ATP CARRIER PROTEIN 1-RELATED-RELATED"/>
    <property type="match status" value="1"/>
</dbReference>
<dbReference type="Pfam" id="PF00153">
    <property type="entry name" value="Mito_carr"/>
    <property type="match status" value="3"/>
</dbReference>
<dbReference type="PRINTS" id="PR00927">
    <property type="entry name" value="ADPTRNSLCASE"/>
</dbReference>
<dbReference type="PRINTS" id="PR00926">
    <property type="entry name" value="MITOCARRIER"/>
</dbReference>
<dbReference type="SUPFAM" id="SSF103506">
    <property type="entry name" value="Mitochondrial carrier"/>
    <property type="match status" value="1"/>
</dbReference>
<dbReference type="PROSITE" id="PS50920">
    <property type="entry name" value="SOLCAR"/>
    <property type="match status" value="3"/>
</dbReference>
<sequence length="386" mass="42093">MDQVQHPSVMQKVAGQLFRSSHSQDFQGYNGSFRSPALYQRRAAYGNYSNAALQHPVRAFGDLSMVPSTASAICVQAPAEKGFSSFAIDFLMGGVSAAVSKTAAAPIERVKLLIQNQDEMIKSGRLSEPYKGIGDCFKRTIKDEGFGSLWRGNTANVIRYFPTQALNFAFKDYFKRLFNFKKDRDGYWKWFAGNLASGGAAGASSLLFVYSLDYARTRLANDAKAAKKGGERQFNGLVDVYRKTLKSDGIAGLYRGFNISCVGIIVYRGLYFGMYDSLKPVLLTGSMQDSFFASFVLGWLITNGAALASYPIDTVRRRMMMTSGKAVKYKSSLDAFSQILKNEGGKSLFKGAGSNILRAIAGAGVLAGYDKLQLIVFGKKYGSGGA</sequence>
<gene>
    <name type="primary">ANT1</name>
</gene>
<organism>
    <name type="scientific">Gossypium hirsutum</name>
    <name type="common">Upland cotton</name>
    <name type="synonym">Gossypium mexicanum</name>
    <dbReference type="NCBI Taxonomy" id="3635"/>
    <lineage>
        <taxon>Eukaryota</taxon>
        <taxon>Viridiplantae</taxon>
        <taxon>Streptophyta</taxon>
        <taxon>Embryophyta</taxon>
        <taxon>Tracheophyta</taxon>
        <taxon>Spermatophyta</taxon>
        <taxon>Magnoliopsida</taxon>
        <taxon>eudicotyledons</taxon>
        <taxon>Gunneridae</taxon>
        <taxon>Pentapetalae</taxon>
        <taxon>rosids</taxon>
        <taxon>malvids</taxon>
        <taxon>Malvales</taxon>
        <taxon>Malvaceae</taxon>
        <taxon>Malvoideae</taxon>
        <taxon>Gossypium</taxon>
    </lineage>
</organism>